<proteinExistence type="inferred from homology"/>
<reference key="1">
    <citation type="journal article" date="2005" name="Nucleic Acids Res.">
        <title>The genome sequence of Salmonella enterica serovar Choleraesuis, a highly invasive and resistant zoonotic pathogen.</title>
        <authorList>
            <person name="Chiu C.-H."/>
            <person name="Tang P."/>
            <person name="Chu C."/>
            <person name="Hu S."/>
            <person name="Bao Q."/>
            <person name="Yu J."/>
            <person name="Chou Y.-Y."/>
            <person name="Wang H.-S."/>
            <person name="Lee Y.-S."/>
        </authorList>
    </citation>
    <scope>NUCLEOTIDE SEQUENCE [LARGE SCALE GENOMIC DNA]</scope>
    <source>
        <strain>SC-B67</strain>
    </source>
</reference>
<name>TDH_SALCH</name>
<keyword id="KW-0963">Cytoplasm</keyword>
<keyword id="KW-0479">Metal-binding</keyword>
<keyword id="KW-0520">NAD</keyword>
<keyword id="KW-0560">Oxidoreductase</keyword>
<keyword id="KW-0862">Zinc</keyword>
<organism>
    <name type="scientific">Salmonella choleraesuis (strain SC-B67)</name>
    <dbReference type="NCBI Taxonomy" id="321314"/>
    <lineage>
        <taxon>Bacteria</taxon>
        <taxon>Pseudomonadati</taxon>
        <taxon>Pseudomonadota</taxon>
        <taxon>Gammaproteobacteria</taxon>
        <taxon>Enterobacterales</taxon>
        <taxon>Enterobacteriaceae</taxon>
        <taxon>Salmonella</taxon>
    </lineage>
</organism>
<gene>
    <name evidence="1" type="primary">tdh</name>
    <name type="ordered locus">SCH_3631</name>
</gene>
<evidence type="ECO:0000255" key="1">
    <source>
        <dbReference type="HAMAP-Rule" id="MF_00627"/>
    </source>
</evidence>
<dbReference type="EC" id="1.1.1.103" evidence="1"/>
<dbReference type="EMBL" id="AE017220">
    <property type="protein sequence ID" value="AAX67537.1"/>
    <property type="molecule type" value="Genomic_DNA"/>
</dbReference>
<dbReference type="RefSeq" id="WP_000645990.1">
    <property type="nucleotide sequence ID" value="NC_006905.1"/>
</dbReference>
<dbReference type="SMR" id="Q57IC5"/>
<dbReference type="KEGG" id="sec:SCH_3631"/>
<dbReference type="HOGENOM" id="CLU_026673_11_0_6"/>
<dbReference type="UniPathway" id="UPA00046">
    <property type="reaction ID" value="UER00505"/>
</dbReference>
<dbReference type="Proteomes" id="UP000000538">
    <property type="component" value="Chromosome"/>
</dbReference>
<dbReference type="GO" id="GO:0005737">
    <property type="term" value="C:cytoplasm"/>
    <property type="evidence" value="ECO:0007669"/>
    <property type="project" value="UniProtKB-SubCell"/>
</dbReference>
<dbReference type="GO" id="GO:0008743">
    <property type="term" value="F:L-threonine 3-dehydrogenase activity"/>
    <property type="evidence" value="ECO:0007669"/>
    <property type="project" value="UniProtKB-UniRule"/>
</dbReference>
<dbReference type="GO" id="GO:0008270">
    <property type="term" value="F:zinc ion binding"/>
    <property type="evidence" value="ECO:0007669"/>
    <property type="project" value="UniProtKB-UniRule"/>
</dbReference>
<dbReference type="GO" id="GO:0019518">
    <property type="term" value="P:L-threonine catabolic process to glycine"/>
    <property type="evidence" value="ECO:0007669"/>
    <property type="project" value="UniProtKB-UniPathway"/>
</dbReference>
<dbReference type="FunFam" id="3.40.50.720:FF:000059">
    <property type="entry name" value="L-threonine 3-dehydrogenase"/>
    <property type="match status" value="1"/>
</dbReference>
<dbReference type="Gene3D" id="3.90.180.10">
    <property type="entry name" value="Medium-chain alcohol dehydrogenases, catalytic domain"/>
    <property type="match status" value="1"/>
</dbReference>
<dbReference type="Gene3D" id="3.40.50.720">
    <property type="entry name" value="NAD(P)-binding Rossmann-like Domain"/>
    <property type="match status" value="1"/>
</dbReference>
<dbReference type="HAMAP" id="MF_00627">
    <property type="entry name" value="Thr_dehydrog"/>
    <property type="match status" value="1"/>
</dbReference>
<dbReference type="InterPro" id="IPR013149">
    <property type="entry name" value="ADH-like_C"/>
</dbReference>
<dbReference type="InterPro" id="IPR013154">
    <property type="entry name" value="ADH-like_N"/>
</dbReference>
<dbReference type="InterPro" id="IPR002328">
    <property type="entry name" value="ADH_Zn_CS"/>
</dbReference>
<dbReference type="InterPro" id="IPR011032">
    <property type="entry name" value="GroES-like_sf"/>
</dbReference>
<dbReference type="InterPro" id="IPR004627">
    <property type="entry name" value="L-Threonine_3-DHase"/>
</dbReference>
<dbReference type="InterPro" id="IPR036291">
    <property type="entry name" value="NAD(P)-bd_dom_sf"/>
</dbReference>
<dbReference type="InterPro" id="IPR020843">
    <property type="entry name" value="PKS_ER"/>
</dbReference>
<dbReference type="InterPro" id="IPR050129">
    <property type="entry name" value="Zn_alcohol_dh"/>
</dbReference>
<dbReference type="NCBIfam" id="NF003808">
    <property type="entry name" value="PRK05396.1"/>
    <property type="match status" value="1"/>
</dbReference>
<dbReference type="NCBIfam" id="TIGR00692">
    <property type="entry name" value="tdh"/>
    <property type="match status" value="1"/>
</dbReference>
<dbReference type="PANTHER" id="PTHR43401">
    <property type="entry name" value="L-THREONINE 3-DEHYDROGENASE"/>
    <property type="match status" value="1"/>
</dbReference>
<dbReference type="PANTHER" id="PTHR43401:SF2">
    <property type="entry name" value="L-THREONINE 3-DEHYDROGENASE"/>
    <property type="match status" value="1"/>
</dbReference>
<dbReference type="Pfam" id="PF08240">
    <property type="entry name" value="ADH_N"/>
    <property type="match status" value="1"/>
</dbReference>
<dbReference type="Pfam" id="PF00107">
    <property type="entry name" value="ADH_zinc_N"/>
    <property type="match status" value="1"/>
</dbReference>
<dbReference type="SMART" id="SM00829">
    <property type="entry name" value="PKS_ER"/>
    <property type="match status" value="1"/>
</dbReference>
<dbReference type="SUPFAM" id="SSF50129">
    <property type="entry name" value="GroES-like"/>
    <property type="match status" value="1"/>
</dbReference>
<dbReference type="SUPFAM" id="SSF51735">
    <property type="entry name" value="NAD(P)-binding Rossmann-fold domains"/>
    <property type="match status" value="1"/>
</dbReference>
<dbReference type="PROSITE" id="PS00059">
    <property type="entry name" value="ADH_ZINC"/>
    <property type="match status" value="1"/>
</dbReference>
<protein>
    <recommendedName>
        <fullName evidence="1">L-threonine 3-dehydrogenase</fullName>
        <shortName evidence="1">TDH</shortName>
        <ecNumber evidence="1">1.1.1.103</ecNumber>
    </recommendedName>
</protein>
<accession>Q57IC5</accession>
<comment type="function">
    <text evidence="1">Catalyzes the NAD(+)-dependent oxidation of L-threonine to 2-amino-3-ketobutyrate.</text>
</comment>
<comment type="catalytic activity">
    <reaction evidence="1">
        <text>L-threonine + NAD(+) = (2S)-2-amino-3-oxobutanoate + NADH + H(+)</text>
        <dbReference type="Rhea" id="RHEA:13161"/>
        <dbReference type="ChEBI" id="CHEBI:15378"/>
        <dbReference type="ChEBI" id="CHEBI:57540"/>
        <dbReference type="ChEBI" id="CHEBI:57926"/>
        <dbReference type="ChEBI" id="CHEBI:57945"/>
        <dbReference type="ChEBI" id="CHEBI:78948"/>
        <dbReference type="EC" id="1.1.1.103"/>
    </reaction>
</comment>
<comment type="cofactor">
    <cofactor evidence="1">
        <name>Zn(2+)</name>
        <dbReference type="ChEBI" id="CHEBI:29105"/>
    </cofactor>
    <text evidence="1">Binds 2 Zn(2+) ions per subunit.</text>
</comment>
<comment type="pathway">
    <text evidence="1">Amino-acid degradation; L-threonine degradation via oxydo-reductase pathway; glycine from L-threonine: step 1/2.</text>
</comment>
<comment type="subunit">
    <text evidence="1">Homotetramer.</text>
</comment>
<comment type="subcellular location">
    <subcellularLocation>
        <location evidence="1">Cytoplasm</location>
    </subcellularLocation>
</comment>
<comment type="similarity">
    <text evidence="1">Belongs to the zinc-containing alcohol dehydrogenase family.</text>
</comment>
<feature type="chain" id="PRO_0000160852" description="L-threonine 3-dehydrogenase">
    <location>
        <begin position="1"/>
        <end position="341"/>
    </location>
</feature>
<feature type="active site" description="Charge relay system" evidence="1">
    <location>
        <position position="40"/>
    </location>
</feature>
<feature type="active site" description="Charge relay system" evidence="1">
    <location>
        <position position="43"/>
    </location>
</feature>
<feature type="binding site" evidence="1">
    <location>
        <position position="38"/>
    </location>
    <ligand>
        <name>Zn(2+)</name>
        <dbReference type="ChEBI" id="CHEBI:29105"/>
        <label>1</label>
        <note>catalytic</note>
    </ligand>
</feature>
<feature type="binding site" evidence="1">
    <location>
        <position position="63"/>
    </location>
    <ligand>
        <name>Zn(2+)</name>
        <dbReference type="ChEBI" id="CHEBI:29105"/>
        <label>1</label>
        <note>catalytic</note>
    </ligand>
</feature>
<feature type="binding site" evidence="1">
    <location>
        <position position="64"/>
    </location>
    <ligand>
        <name>Zn(2+)</name>
        <dbReference type="ChEBI" id="CHEBI:29105"/>
        <label>1</label>
        <note>catalytic</note>
    </ligand>
</feature>
<feature type="binding site" evidence="1">
    <location>
        <position position="93"/>
    </location>
    <ligand>
        <name>Zn(2+)</name>
        <dbReference type="ChEBI" id="CHEBI:29105"/>
        <label>2</label>
    </ligand>
</feature>
<feature type="binding site" evidence="1">
    <location>
        <position position="96"/>
    </location>
    <ligand>
        <name>Zn(2+)</name>
        <dbReference type="ChEBI" id="CHEBI:29105"/>
        <label>2</label>
    </ligand>
</feature>
<feature type="binding site" evidence="1">
    <location>
        <position position="99"/>
    </location>
    <ligand>
        <name>Zn(2+)</name>
        <dbReference type="ChEBI" id="CHEBI:29105"/>
        <label>2</label>
    </ligand>
</feature>
<feature type="binding site" evidence="1">
    <location>
        <position position="107"/>
    </location>
    <ligand>
        <name>Zn(2+)</name>
        <dbReference type="ChEBI" id="CHEBI:29105"/>
        <label>2</label>
    </ligand>
</feature>
<feature type="binding site" evidence="1">
    <location>
        <position position="175"/>
    </location>
    <ligand>
        <name>NAD(+)</name>
        <dbReference type="ChEBI" id="CHEBI:57540"/>
    </ligand>
</feature>
<feature type="binding site" evidence="1">
    <location>
        <position position="195"/>
    </location>
    <ligand>
        <name>NAD(+)</name>
        <dbReference type="ChEBI" id="CHEBI:57540"/>
    </ligand>
</feature>
<feature type="binding site" evidence="1">
    <location>
        <position position="200"/>
    </location>
    <ligand>
        <name>NAD(+)</name>
        <dbReference type="ChEBI" id="CHEBI:57540"/>
    </ligand>
</feature>
<feature type="binding site" evidence="1">
    <location>
        <begin position="262"/>
        <end position="264"/>
    </location>
    <ligand>
        <name>NAD(+)</name>
        <dbReference type="ChEBI" id="CHEBI:57540"/>
    </ligand>
</feature>
<feature type="binding site" evidence="1">
    <location>
        <begin position="286"/>
        <end position="287"/>
    </location>
    <ligand>
        <name>NAD(+)</name>
        <dbReference type="ChEBI" id="CHEBI:57540"/>
    </ligand>
</feature>
<feature type="site" description="Important for catalytic activity for the proton relay mechanism but does not participate directly in the coordination of zinc atom" evidence="1">
    <location>
        <position position="148"/>
    </location>
</feature>
<sequence length="341" mass="37213">MKALSKLKAEEGIWMTDVPEPEVGHNDLLIKIRKTAICGTDVHIYNWDDWSQKTIPVPMVVGHEYVGEVVGIGQEVKGFKIGDRVSGEGHITCGHCRNCRGGRTHLCRNTTGVGVNRPGCFAEYLVIPAFNAFKIPDNISDDLASIFDPFGNAVHTALSFDLVGEDVLVSGAGPIGVMAAAVAKHVGARHVVITDVNEYRLELARKMGVTRAVNVAKESLNDVMAELGMTEGFDVGLEMSGAPPAFRTMLDTMNHGGRIAMLGIPPSDMSIDWTKVIFKGLFIKGIYGREMFETWYKMAALIQSGLDLSPIITHRFSIDDFQKGFDAMRSGQSGKVILSWD</sequence>